<organism>
    <name type="scientific">Bacillus velezensis (strain DSM 23117 / BGSC 10A6 / LMG 26770 / FZB42)</name>
    <name type="common">Bacillus amyloliquefaciens subsp. plantarum</name>
    <dbReference type="NCBI Taxonomy" id="326423"/>
    <lineage>
        <taxon>Bacteria</taxon>
        <taxon>Bacillati</taxon>
        <taxon>Bacillota</taxon>
        <taxon>Bacilli</taxon>
        <taxon>Bacillales</taxon>
        <taxon>Bacillaceae</taxon>
        <taxon>Bacillus</taxon>
        <taxon>Bacillus amyloliquefaciens group</taxon>
    </lineage>
</organism>
<gene>
    <name evidence="1" type="primary">rlmH</name>
    <name type="ordered locus">RBAM_037150</name>
</gene>
<proteinExistence type="inferred from homology"/>
<comment type="function">
    <text evidence="1">Specifically methylates the pseudouridine at position 1915 (m3Psi1915) in 23S rRNA.</text>
</comment>
<comment type="catalytic activity">
    <reaction evidence="1">
        <text>pseudouridine(1915) in 23S rRNA + S-adenosyl-L-methionine = N(3)-methylpseudouridine(1915) in 23S rRNA + S-adenosyl-L-homocysteine + H(+)</text>
        <dbReference type="Rhea" id="RHEA:42752"/>
        <dbReference type="Rhea" id="RHEA-COMP:10221"/>
        <dbReference type="Rhea" id="RHEA-COMP:10222"/>
        <dbReference type="ChEBI" id="CHEBI:15378"/>
        <dbReference type="ChEBI" id="CHEBI:57856"/>
        <dbReference type="ChEBI" id="CHEBI:59789"/>
        <dbReference type="ChEBI" id="CHEBI:65314"/>
        <dbReference type="ChEBI" id="CHEBI:74486"/>
        <dbReference type="EC" id="2.1.1.177"/>
    </reaction>
</comment>
<comment type="subunit">
    <text evidence="1">Homodimer.</text>
</comment>
<comment type="subcellular location">
    <subcellularLocation>
        <location evidence="1">Cytoplasm</location>
    </subcellularLocation>
</comment>
<comment type="similarity">
    <text evidence="1">Belongs to the RNA methyltransferase RlmH family.</text>
</comment>
<dbReference type="EC" id="2.1.1.177" evidence="1"/>
<dbReference type="EMBL" id="CP000560">
    <property type="protein sequence ID" value="ABS76044.1"/>
    <property type="molecule type" value="Genomic_DNA"/>
</dbReference>
<dbReference type="RefSeq" id="WP_007407874.1">
    <property type="nucleotide sequence ID" value="NC_009725.2"/>
</dbReference>
<dbReference type="SMR" id="A7ZAL8"/>
<dbReference type="GeneID" id="93082852"/>
<dbReference type="KEGG" id="bay:RBAM_037150"/>
<dbReference type="HOGENOM" id="CLU_100552_0_0_9"/>
<dbReference type="Proteomes" id="UP000001120">
    <property type="component" value="Chromosome"/>
</dbReference>
<dbReference type="GO" id="GO:0005737">
    <property type="term" value="C:cytoplasm"/>
    <property type="evidence" value="ECO:0007669"/>
    <property type="project" value="UniProtKB-SubCell"/>
</dbReference>
<dbReference type="GO" id="GO:0070038">
    <property type="term" value="F:rRNA (pseudouridine-N3-)-methyltransferase activity"/>
    <property type="evidence" value="ECO:0007669"/>
    <property type="project" value="UniProtKB-UniRule"/>
</dbReference>
<dbReference type="CDD" id="cd18081">
    <property type="entry name" value="RlmH-like"/>
    <property type="match status" value="1"/>
</dbReference>
<dbReference type="Gene3D" id="3.40.1280.10">
    <property type="match status" value="1"/>
</dbReference>
<dbReference type="HAMAP" id="MF_00658">
    <property type="entry name" value="23SrRNA_methyltr_H"/>
    <property type="match status" value="1"/>
</dbReference>
<dbReference type="InterPro" id="IPR029028">
    <property type="entry name" value="Alpha/beta_knot_MTases"/>
</dbReference>
<dbReference type="InterPro" id="IPR003742">
    <property type="entry name" value="RlmH-like"/>
</dbReference>
<dbReference type="InterPro" id="IPR029026">
    <property type="entry name" value="tRNA_m1G_MTases_N"/>
</dbReference>
<dbReference type="NCBIfam" id="NF000985">
    <property type="entry name" value="PRK00103.1-3"/>
    <property type="match status" value="1"/>
</dbReference>
<dbReference type="NCBIfam" id="TIGR00246">
    <property type="entry name" value="tRNA_RlmH_YbeA"/>
    <property type="match status" value="1"/>
</dbReference>
<dbReference type="PANTHER" id="PTHR33603">
    <property type="entry name" value="METHYLTRANSFERASE"/>
    <property type="match status" value="1"/>
</dbReference>
<dbReference type="PANTHER" id="PTHR33603:SF1">
    <property type="entry name" value="RIBOSOMAL RNA LARGE SUBUNIT METHYLTRANSFERASE H"/>
    <property type="match status" value="1"/>
</dbReference>
<dbReference type="Pfam" id="PF02590">
    <property type="entry name" value="SPOUT_MTase"/>
    <property type="match status" value="1"/>
</dbReference>
<dbReference type="PIRSF" id="PIRSF004505">
    <property type="entry name" value="MT_bac"/>
    <property type="match status" value="1"/>
</dbReference>
<dbReference type="SUPFAM" id="SSF75217">
    <property type="entry name" value="alpha/beta knot"/>
    <property type="match status" value="1"/>
</dbReference>
<reference key="1">
    <citation type="journal article" date="2007" name="Nat. Biotechnol.">
        <title>Comparative analysis of the complete genome sequence of the plant growth-promoting bacterium Bacillus amyloliquefaciens FZB42.</title>
        <authorList>
            <person name="Chen X.H."/>
            <person name="Koumoutsi A."/>
            <person name="Scholz R."/>
            <person name="Eisenreich A."/>
            <person name="Schneider K."/>
            <person name="Heinemeyer I."/>
            <person name="Morgenstern B."/>
            <person name="Voss B."/>
            <person name="Hess W.R."/>
            <person name="Reva O."/>
            <person name="Junge H."/>
            <person name="Voigt B."/>
            <person name="Jungblut P.R."/>
            <person name="Vater J."/>
            <person name="Suessmuth R."/>
            <person name="Liesegang H."/>
            <person name="Strittmatter A."/>
            <person name="Gottschalk G."/>
            <person name="Borriss R."/>
        </authorList>
    </citation>
    <scope>NUCLEOTIDE SEQUENCE [LARGE SCALE GENOMIC DNA]</scope>
    <source>
        <strain>DSM 23117 / BGSC 10A6 / LMG 26770 / FZB42</strain>
    </source>
</reference>
<keyword id="KW-0963">Cytoplasm</keyword>
<keyword id="KW-0489">Methyltransferase</keyword>
<keyword id="KW-0698">rRNA processing</keyword>
<keyword id="KW-0949">S-adenosyl-L-methionine</keyword>
<keyword id="KW-0808">Transferase</keyword>
<protein>
    <recommendedName>
        <fullName evidence="1">Ribosomal RNA large subunit methyltransferase H</fullName>
        <ecNumber evidence="1">2.1.1.177</ecNumber>
    </recommendedName>
    <alternativeName>
        <fullName evidence="1">23S rRNA (pseudouridine1915-N3)-methyltransferase</fullName>
    </alternativeName>
    <alternativeName>
        <fullName evidence="1">23S rRNA m3Psi1915 methyltransferase</fullName>
    </alternativeName>
    <alternativeName>
        <fullName evidence="1">rRNA (pseudouridine-N3-)-methyltransferase RlmH</fullName>
    </alternativeName>
</protein>
<sequence>MNINIVTIGKLKEKYLKQGIEEYKKRLSAYAKIDIIELPDEKAPENLSDQDMKIVKDKEGERILAKISPDTHVIALAIEGKMKTSEELADTIDKLATYGKSKITFVIGGSLGLSDAVMKRADEKLSFSKMTFPHQLMRLILVEQIYRAFRINRGEPYHK</sequence>
<evidence type="ECO:0000255" key="1">
    <source>
        <dbReference type="HAMAP-Rule" id="MF_00658"/>
    </source>
</evidence>
<accession>A7ZAL8</accession>
<feature type="chain" id="PRO_1000082793" description="Ribosomal RNA large subunit methyltransferase H">
    <location>
        <begin position="1"/>
        <end position="159"/>
    </location>
</feature>
<feature type="binding site" evidence="1">
    <location>
        <position position="76"/>
    </location>
    <ligand>
        <name>S-adenosyl-L-methionine</name>
        <dbReference type="ChEBI" id="CHEBI:59789"/>
    </ligand>
</feature>
<feature type="binding site" evidence="1">
    <location>
        <position position="108"/>
    </location>
    <ligand>
        <name>S-adenosyl-L-methionine</name>
        <dbReference type="ChEBI" id="CHEBI:59789"/>
    </ligand>
</feature>
<feature type="binding site" evidence="1">
    <location>
        <begin position="127"/>
        <end position="132"/>
    </location>
    <ligand>
        <name>S-adenosyl-L-methionine</name>
        <dbReference type="ChEBI" id="CHEBI:59789"/>
    </ligand>
</feature>
<name>RLMH_BACVZ</name>